<organismHost>
    <name type="scientific">Apodemus sylvaticus</name>
    <name type="common">European woodmouse</name>
    <dbReference type="NCBI Taxonomy" id="10129"/>
</organismHost>
<organismHost>
    <name type="scientific">Bos taurus</name>
    <name type="common">Bovine</name>
    <dbReference type="NCBI Taxonomy" id="9913"/>
</organismHost>
<organismHost>
    <name type="scientific">Felis catus</name>
    <name type="common">Cat</name>
    <name type="synonym">Felis silvestris catus</name>
    <dbReference type="NCBI Taxonomy" id="9685"/>
</organismHost>
<organismHost>
    <name type="scientific">Homo sapiens</name>
    <name type="common">Human</name>
    <dbReference type="NCBI Taxonomy" id="9606"/>
</organismHost>
<organismHost>
    <name type="scientific">Loxodonta africana</name>
    <name type="common">African elephant</name>
    <dbReference type="NCBI Taxonomy" id="9785"/>
</organismHost>
<organismHost>
    <name type="scientific">Microtus agrestis</name>
    <name type="common">Short-tailed field vole</name>
    <dbReference type="NCBI Taxonomy" id="29092"/>
</organismHost>
<organismHost>
    <name type="scientific">Mus musculus</name>
    <name type="common">Mouse</name>
    <dbReference type="NCBI Taxonomy" id="10090"/>
</organismHost>
<organismHost>
    <name type="scientific">Myodes glareolus</name>
    <name type="common">Bank vole</name>
    <name type="synonym">Clethrionomys glareolus</name>
    <dbReference type="NCBI Taxonomy" id="447135"/>
</organismHost>
<sequence length="1284" mass="150330">MEVTNLIEKCTKHSKDFATEVEKLWNDELSSESGLSRKTRNVIRNILRDITKSLTTDKKSKCFRILERSTINGEQIKDVYKTIFNNGVDVESRINTTGKYVLFTVMTYAAAELRLIKSDEIFALLSRFFNMICDIHRKYGCGNMFVGIPAALINLLEIDQINKLFSVFSTRYDAKTFIYTEYFLFLNINHYLLVSGSELFINVAYGPASFSSPISVPDYIMEALTFKACDHIMKSGDLKYTYAFTKKVKDLFNTKSDSVYQYVRLHEMSYDGVSEDTDDDDEVFAILNLSIDSSVDRYRNRVLLLTPEVASLRKEYSDVEPDYKYLMDEEVPAYDKHLPKPITNTGIEEPHATGGDKEEQEQQPVKVVQSKPDDGITPYNPFEDPDYVPTITKTVLGIADYQLVINKLIEWLDKCEEECGNGGEYKTELEEAKRKLTELNLELSDKLSKIRTLERDSVYKTERIDRLTKEIKELRDIQNGTDDGSDSSEIDKKTIRELRESLDREREMRTELERELDTIRDGKVEGSCQRELELSRMWLKQRDDDLRAEIDKRRNVEWELSRLRRDIKECDKYKEDLDKAKTTISNYVSRISTLESEIAKYQQDRDTLSVVRRELEEERRRVRDLESRLDECTRNQEDTQEVDALRSRIRELENKLADCMESGGGNLTEISRLQSKISDLERQLRECRGNATEISRLQYRITDLERQLNDCRRNNENNADTEREMQRLRDRITDLERQLSDCRRNNESNADMEREMQRLRDRIMDLDRQLNECKRDGNGTSSEEVNRLKTRIRDLERSLEICSKDESELYSAYKSELGRAREQISNLQESLRRERESDKTDSYYRRELTRERNKIVELEKELNKCFDTNHAKYIDEINSKKTRISDLERQLAACKSNGGSNGDMDQYKREIESLKRELAECRRGNNGSHSDCKYYDEEAREEVKRLRQELTQLHEDLKRARESDKNDSYYKRELERQRAKVIEVEKELERYFDDSRLAECKRHGDEMLRKIADLEKKLRDGGNGNGGNGCTSSCEFERKRIAVLEVEVRKSMETIKSLEKFMEFDRLQKDCADKLDREKERRMKAERDLEREIARKNCGGNPCERELESERSNVKRLEYQLDAEKEKVKFYKRELERDRYLSSRYLTSSSDPDEKPLPNYTFPRIEVEPLTTEDTEPKPVEVVPPSSDVTEPISSGVTPSVDAEPEHPQLSEYQTSVSQVAVTPPPKPETPQISEYQDYSELYSASNNTESKNVFSELAYLDDLDKLDDIDEYLLNNIMPEKTV</sequence>
<organism>
    <name type="scientific">Cowpox virus</name>
    <name type="common">CPV</name>
    <dbReference type="NCBI Taxonomy" id="10243"/>
    <lineage>
        <taxon>Viruses</taxon>
        <taxon>Varidnaviria</taxon>
        <taxon>Bamfordvirae</taxon>
        <taxon>Nucleocytoviricota</taxon>
        <taxon>Pokkesviricetes</taxon>
        <taxon>Chitovirales</taxon>
        <taxon>Poxviridae</taxon>
        <taxon>Chordopoxvirinae</taxon>
        <taxon>Orthopoxvirus</taxon>
    </lineage>
</organism>
<evidence type="ECO:0000250" key="1"/>
<evidence type="ECO:0000256" key="2">
    <source>
        <dbReference type="SAM" id="MobiDB-lite"/>
    </source>
</evidence>
<evidence type="ECO:0000305" key="3"/>
<keyword id="KW-0426">Late protein</keyword>
<keyword id="KW-0677">Repeat</keyword>
<keyword id="KW-0946">Virion</keyword>
<dbReference type="EMBL" id="D00319">
    <property type="protein sequence ID" value="BAA00222.1"/>
    <property type="molecule type" value="Genomic_DNA"/>
</dbReference>
<dbReference type="EMBL" id="X06343">
    <property type="protein sequence ID" value="CAA29650.1"/>
    <property type="molecule type" value="Genomic_DNA"/>
</dbReference>
<dbReference type="PIR" id="JQ0006">
    <property type="entry name" value="WMVZAI"/>
</dbReference>
<dbReference type="SMR" id="P16602"/>
<dbReference type="GO" id="GO:0044423">
    <property type="term" value="C:virion component"/>
    <property type="evidence" value="ECO:0007669"/>
    <property type="project" value="UniProtKB-KW"/>
</dbReference>
<dbReference type="GO" id="GO:0016032">
    <property type="term" value="P:viral process"/>
    <property type="evidence" value="ECO:0007669"/>
    <property type="project" value="InterPro"/>
</dbReference>
<dbReference type="Gene3D" id="1.10.287.1490">
    <property type="match status" value="1"/>
</dbReference>
<dbReference type="Gene3D" id="1.20.58.130">
    <property type="match status" value="1"/>
</dbReference>
<dbReference type="InterPro" id="IPR007596">
    <property type="entry name" value="Pox_A_type_inc"/>
</dbReference>
<dbReference type="PANTHER" id="PTHR45615:SF80">
    <property type="entry name" value="GRIP DOMAIN-CONTAINING PROTEIN"/>
    <property type="match status" value="1"/>
</dbReference>
<dbReference type="PANTHER" id="PTHR45615">
    <property type="entry name" value="MYOSIN HEAVY CHAIN, NON-MUSCLE"/>
    <property type="match status" value="1"/>
</dbReference>
<dbReference type="Pfam" id="PF04508">
    <property type="entry name" value="Pox_A_type_inc"/>
    <property type="match status" value="10"/>
</dbReference>
<protein>
    <recommendedName>
        <fullName>A-type inclusion protein A25 homolog</fullName>
        <shortName>ATI</shortName>
    </recommendedName>
</protein>
<reference key="1">
    <citation type="journal article" date="1988" name="J. Gen. Virol.">
        <title>Cloning and characterization of the gene encoding the major protein of the A-type inclusion body of cowpox virus.</title>
        <authorList>
            <person name="Funahashi S."/>
            <person name="Sato T."/>
            <person name="Shida H."/>
        </authorList>
    </citation>
    <scope>NUCLEOTIDE SEQUENCE [GENOMIC DNA]</scope>
    <source>
        <strain>CPRO6</strain>
    </source>
</reference>
<reference key="2">
    <citation type="journal article" date="1987" name="EMBO J.">
        <title>Messenger RNAs of a strongly-expressed late gene of cowpox virus contain 5'-terminal poly(A) sequences.</title>
        <authorList>
            <person name="Patel D.D."/>
            <person name="Pickup D.J."/>
        </authorList>
    </citation>
    <scope>NUCLEOTIDE SEQUENCE [GENOMIC DNA] OF 1-109</scope>
</reference>
<accession>P16602</accession>
<feature type="chain" id="PRO_0000099284" description="A-type inclusion protein A25 homolog">
    <location>
        <begin position="1"/>
        <end position="1284"/>
    </location>
</feature>
<feature type="repeat" description="1">
    <location>
        <begin position="611"/>
        <end position="637"/>
    </location>
</feature>
<feature type="repeat" description="2">
    <location>
        <begin position="638"/>
        <end position="665"/>
    </location>
</feature>
<feature type="repeat" description="3">
    <location>
        <begin position="666"/>
        <end position="689"/>
    </location>
</feature>
<feature type="repeat" description="4">
    <location>
        <begin position="690"/>
        <end position="720"/>
    </location>
</feature>
<feature type="repeat" description="5">
    <location>
        <begin position="721"/>
        <end position="751"/>
    </location>
</feature>
<feature type="repeat" description="6">
    <location>
        <begin position="752"/>
        <end position="780"/>
    </location>
</feature>
<feature type="repeat" description="7">
    <location>
        <begin position="781"/>
        <end position="811"/>
    </location>
</feature>
<feature type="repeat" description="8">
    <location>
        <begin position="812"/>
        <end position="842"/>
    </location>
</feature>
<feature type="repeat" description="9">
    <location>
        <begin position="843"/>
        <end position="871"/>
    </location>
</feature>
<feature type="repeat" description="10">
    <location>
        <begin position="872"/>
        <end position="912"/>
    </location>
</feature>
<feature type="region of interest" description="Disordered" evidence="2">
    <location>
        <begin position="340"/>
        <end position="383"/>
    </location>
</feature>
<feature type="region of interest" description="10 X approximate tandem repeats">
    <location>
        <begin position="611"/>
        <end position="912"/>
    </location>
</feature>
<feature type="region of interest" description="Disordered" evidence="2">
    <location>
        <begin position="1169"/>
        <end position="1234"/>
    </location>
</feature>
<feature type="compositionally biased region" description="Basic and acidic residues" evidence="2">
    <location>
        <begin position="348"/>
        <end position="357"/>
    </location>
</feature>
<feature type="compositionally biased region" description="Low complexity" evidence="2">
    <location>
        <begin position="1180"/>
        <end position="1192"/>
    </location>
</feature>
<feature type="compositionally biased region" description="Polar residues" evidence="2">
    <location>
        <begin position="1211"/>
        <end position="1221"/>
    </location>
</feature>
<proteinExistence type="inferred from homology"/>
<comment type="function">
    <text evidence="1">Structural protein that forms a matrix surrounding the mature virion (MV) through interaction with protein A26. Presence of protein A25 in the virion structurally prevents direct virus-cell fusion mechanism (By similarity).</text>
</comment>
<comment type="subunit">
    <text evidence="1">Interacts (via N-terminus) with protein A26.</text>
</comment>
<comment type="subcellular location">
    <subcellularLocation>
        <location>Virion</location>
    </subcellularLocation>
    <text evidence="1">Present above the membrane of mature virions (MV).</text>
</comment>
<comment type="miscellaneous">
    <text>Some orthopoxviruses such as cowpox, ectromelia, and raccoonpox viruses, form large cytoplasmic inclusions within which mature virions are embedded by a process called occlusion. In those viruses, A26 bridges mature virion with inclusion bodies through interactions with proteins A25 and A27 on the mature virion membrane.</text>
</comment>
<comment type="similarity">
    <text evidence="3">Belongs to the poxviridae A25 protein family.</text>
</comment>
<gene>
    <name type="primary">ATI</name>
</gene>
<name>ATI_COWPX</name>